<keyword id="KW-0238">DNA-binding</keyword>
<keyword id="KW-0408">Iron</keyword>
<keyword id="KW-0411">Iron-sulfur</keyword>
<keyword id="KW-0479">Metal-binding</keyword>
<keyword id="KW-0678">Repressor</keyword>
<keyword id="KW-0804">Transcription</keyword>
<keyword id="KW-0805">Transcription regulation</keyword>
<protein>
    <recommendedName>
        <fullName evidence="1">Probable [Fe-S]-dependent transcriptional repressor</fullName>
    </recommendedName>
</protein>
<feature type="chain" id="PRO_0000382180" description="Probable [Fe-S]-dependent transcriptional repressor">
    <location>
        <begin position="1"/>
        <end position="79"/>
    </location>
</feature>
<feature type="binding site" evidence="1">
    <location>
        <position position="56"/>
    </location>
    <ligand>
        <name>iron-sulfur cluster</name>
        <dbReference type="ChEBI" id="CHEBI:30408"/>
    </ligand>
</feature>
<feature type="binding site" evidence="1">
    <location>
        <position position="61"/>
    </location>
    <ligand>
        <name>iron-sulfur cluster</name>
        <dbReference type="ChEBI" id="CHEBI:30408"/>
    </ligand>
</feature>
<feature type="binding site" evidence="1">
    <location>
        <position position="64"/>
    </location>
    <ligand>
        <name>iron-sulfur cluster</name>
        <dbReference type="ChEBI" id="CHEBI:30408"/>
    </ligand>
</feature>
<feature type="binding site" evidence="1">
    <location>
        <position position="70"/>
    </location>
    <ligand>
        <name>iron-sulfur cluster</name>
        <dbReference type="ChEBI" id="CHEBI:30408"/>
    </ligand>
</feature>
<sequence>MAGLLQIRDALALHGNVQALQLSRQLAAPLPLVQAMLERLIAMGKVERIEQDNSACLSGSCKSCPEGQKCSSTVVYRLK</sequence>
<gene>
    <name evidence="1" type="primary">feoC</name>
    <name type="ordered locus">Spro_4630</name>
</gene>
<accession>A8GKT3</accession>
<evidence type="ECO:0000255" key="1">
    <source>
        <dbReference type="HAMAP-Rule" id="MF_01586"/>
    </source>
</evidence>
<dbReference type="EMBL" id="CP000826">
    <property type="protein sequence ID" value="ABV43723.1"/>
    <property type="molecule type" value="Genomic_DNA"/>
</dbReference>
<dbReference type="SMR" id="A8GKT3"/>
<dbReference type="STRING" id="399741.Spro_4630"/>
<dbReference type="KEGG" id="spe:Spro_4630"/>
<dbReference type="eggNOG" id="ENOG50330S2">
    <property type="taxonomic scope" value="Bacteria"/>
</dbReference>
<dbReference type="HOGENOM" id="CLU_189182_0_0_6"/>
<dbReference type="OrthoDB" id="6903254at2"/>
<dbReference type="GO" id="GO:0003677">
    <property type="term" value="F:DNA binding"/>
    <property type="evidence" value="ECO:0007669"/>
    <property type="project" value="UniProtKB-KW"/>
</dbReference>
<dbReference type="GO" id="GO:0005506">
    <property type="term" value="F:iron ion binding"/>
    <property type="evidence" value="ECO:0007669"/>
    <property type="project" value="UniProtKB-UniRule"/>
</dbReference>
<dbReference type="GO" id="GO:0051536">
    <property type="term" value="F:iron-sulfur cluster binding"/>
    <property type="evidence" value="ECO:0007669"/>
    <property type="project" value="UniProtKB-KW"/>
</dbReference>
<dbReference type="Gene3D" id="1.10.10.10">
    <property type="entry name" value="Winged helix-like DNA-binding domain superfamily/Winged helix DNA-binding domain"/>
    <property type="match status" value="1"/>
</dbReference>
<dbReference type="HAMAP" id="MF_01586">
    <property type="entry name" value="FeoC"/>
    <property type="match status" value="1"/>
</dbReference>
<dbReference type="InterPro" id="IPR023732">
    <property type="entry name" value="FeoC"/>
</dbReference>
<dbReference type="InterPro" id="IPR015102">
    <property type="entry name" value="Tscrpt_reg_HTH_FeoC"/>
</dbReference>
<dbReference type="InterPro" id="IPR036388">
    <property type="entry name" value="WH-like_DNA-bd_sf"/>
</dbReference>
<dbReference type="InterPro" id="IPR036390">
    <property type="entry name" value="WH_DNA-bd_sf"/>
</dbReference>
<dbReference type="Pfam" id="PF09012">
    <property type="entry name" value="FeoC"/>
    <property type="match status" value="1"/>
</dbReference>
<dbReference type="SUPFAM" id="SSF46785">
    <property type="entry name" value="Winged helix' DNA-binding domain"/>
    <property type="match status" value="1"/>
</dbReference>
<comment type="function">
    <text evidence="1">May function as a transcriptional regulator that controls feoABC expression.</text>
</comment>
<comment type="similarity">
    <text evidence="1">Belongs to the FeoC family.</text>
</comment>
<reference key="1">
    <citation type="submission" date="2007-09" db="EMBL/GenBank/DDBJ databases">
        <title>Complete sequence of chromosome of Serratia proteamaculans 568.</title>
        <authorList>
            <consortium name="US DOE Joint Genome Institute"/>
            <person name="Copeland A."/>
            <person name="Lucas S."/>
            <person name="Lapidus A."/>
            <person name="Barry K."/>
            <person name="Glavina del Rio T."/>
            <person name="Dalin E."/>
            <person name="Tice H."/>
            <person name="Pitluck S."/>
            <person name="Chain P."/>
            <person name="Malfatti S."/>
            <person name="Shin M."/>
            <person name="Vergez L."/>
            <person name="Schmutz J."/>
            <person name="Larimer F."/>
            <person name="Land M."/>
            <person name="Hauser L."/>
            <person name="Kyrpides N."/>
            <person name="Kim E."/>
            <person name="Taghavi S."/>
            <person name="Newman L."/>
            <person name="Vangronsveld J."/>
            <person name="van der Lelie D."/>
            <person name="Richardson P."/>
        </authorList>
    </citation>
    <scope>NUCLEOTIDE SEQUENCE [LARGE SCALE GENOMIC DNA]</scope>
    <source>
        <strain>568</strain>
    </source>
</reference>
<organism>
    <name type="scientific">Serratia proteamaculans (strain 568)</name>
    <dbReference type="NCBI Taxonomy" id="399741"/>
    <lineage>
        <taxon>Bacteria</taxon>
        <taxon>Pseudomonadati</taxon>
        <taxon>Pseudomonadota</taxon>
        <taxon>Gammaproteobacteria</taxon>
        <taxon>Enterobacterales</taxon>
        <taxon>Yersiniaceae</taxon>
        <taxon>Serratia</taxon>
    </lineage>
</organism>
<proteinExistence type="inferred from homology"/>
<name>FEOC_SERP5</name>